<dbReference type="EC" id="2.1.2.1" evidence="1"/>
<dbReference type="EMBL" id="AE015451">
    <property type="protein sequence ID" value="AAN66296.1"/>
    <property type="molecule type" value="Genomic_DNA"/>
</dbReference>
<dbReference type="RefSeq" id="NP_742832.1">
    <property type="nucleotide sequence ID" value="NC_002947.4"/>
</dbReference>
<dbReference type="SMR" id="Q88Q27"/>
<dbReference type="STRING" id="160488.PP_0671"/>
<dbReference type="PaxDb" id="160488-PP_0671"/>
<dbReference type="KEGG" id="ppu:PP_0671"/>
<dbReference type="PATRIC" id="fig|160488.4.peg.717"/>
<dbReference type="eggNOG" id="COG0112">
    <property type="taxonomic scope" value="Bacteria"/>
</dbReference>
<dbReference type="HOGENOM" id="CLU_022477_2_1_6"/>
<dbReference type="OrthoDB" id="9803846at2"/>
<dbReference type="PhylomeDB" id="Q88Q27"/>
<dbReference type="BioCyc" id="PPUT160488:G1G01-743-MONOMER"/>
<dbReference type="UniPathway" id="UPA00193"/>
<dbReference type="UniPathway" id="UPA00288">
    <property type="reaction ID" value="UER01023"/>
</dbReference>
<dbReference type="Proteomes" id="UP000000556">
    <property type="component" value="Chromosome"/>
</dbReference>
<dbReference type="GO" id="GO:0005829">
    <property type="term" value="C:cytosol"/>
    <property type="evidence" value="ECO:0007669"/>
    <property type="project" value="TreeGrafter"/>
</dbReference>
<dbReference type="GO" id="GO:0004372">
    <property type="term" value="F:glycine hydroxymethyltransferase activity"/>
    <property type="evidence" value="ECO:0007669"/>
    <property type="project" value="UniProtKB-UniRule"/>
</dbReference>
<dbReference type="GO" id="GO:0030170">
    <property type="term" value="F:pyridoxal phosphate binding"/>
    <property type="evidence" value="ECO:0007669"/>
    <property type="project" value="UniProtKB-UniRule"/>
</dbReference>
<dbReference type="GO" id="GO:0019264">
    <property type="term" value="P:glycine biosynthetic process from serine"/>
    <property type="evidence" value="ECO:0007669"/>
    <property type="project" value="UniProtKB-UniRule"/>
</dbReference>
<dbReference type="GO" id="GO:0035999">
    <property type="term" value="P:tetrahydrofolate interconversion"/>
    <property type="evidence" value="ECO:0007669"/>
    <property type="project" value="UniProtKB-UniRule"/>
</dbReference>
<dbReference type="CDD" id="cd00378">
    <property type="entry name" value="SHMT"/>
    <property type="match status" value="1"/>
</dbReference>
<dbReference type="FunFam" id="3.40.640.10:FF:000001">
    <property type="entry name" value="Serine hydroxymethyltransferase"/>
    <property type="match status" value="1"/>
</dbReference>
<dbReference type="FunFam" id="3.90.1150.10:FF:000003">
    <property type="entry name" value="Serine hydroxymethyltransferase"/>
    <property type="match status" value="1"/>
</dbReference>
<dbReference type="Gene3D" id="3.90.1150.10">
    <property type="entry name" value="Aspartate Aminotransferase, domain 1"/>
    <property type="match status" value="1"/>
</dbReference>
<dbReference type="Gene3D" id="3.40.640.10">
    <property type="entry name" value="Type I PLP-dependent aspartate aminotransferase-like (Major domain)"/>
    <property type="match status" value="1"/>
</dbReference>
<dbReference type="HAMAP" id="MF_00051">
    <property type="entry name" value="SHMT"/>
    <property type="match status" value="1"/>
</dbReference>
<dbReference type="InterPro" id="IPR015424">
    <property type="entry name" value="PyrdxlP-dep_Trfase"/>
</dbReference>
<dbReference type="InterPro" id="IPR015421">
    <property type="entry name" value="PyrdxlP-dep_Trfase_major"/>
</dbReference>
<dbReference type="InterPro" id="IPR015422">
    <property type="entry name" value="PyrdxlP-dep_Trfase_small"/>
</dbReference>
<dbReference type="InterPro" id="IPR001085">
    <property type="entry name" value="Ser_HO-MeTrfase"/>
</dbReference>
<dbReference type="InterPro" id="IPR049943">
    <property type="entry name" value="Ser_HO-MeTrfase-like"/>
</dbReference>
<dbReference type="InterPro" id="IPR019798">
    <property type="entry name" value="Ser_HO-MeTrfase_PLP_BS"/>
</dbReference>
<dbReference type="InterPro" id="IPR039429">
    <property type="entry name" value="SHMT-like_dom"/>
</dbReference>
<dbReference type="NCBIfam" id="NF000586">
    <property type="entry name" value="PRK00011.1"/>
    <property type="match status" value="1"/>
</dbReference>
<dbReference type="PANTHER" id="PTHR11680">
    <property type="entry name" value="SERINE HYDROXYMETHYLTRANSFERASE"/>
    <property type="match status" value="1"/>
</dbReference>
<dbReference type="PANTHER" id="PTHR11680:SF50">
    <property type="entry name" value="SERINE HYDROXYMETHYLTRANSFERASE"/>
    <property type="match status" value="1"/>
</dbReference>
<dbReference type="Pfam" id="PF00464">
    <property type="entry name" value="SHMT"/>
    <property type="match status" value="1"/>
</dbReference>
<dbReference type="PIRSF" id="PIRSF000412">
    <property type="entry name" value="SHMT"/>
    <property type="match status" value="1"/>
</dbReference>
<dbReference type="SUPFAM" id="SSF53383">
    <property type="entry name" value="PLP-dependent transferases"/>
    <property type="match status" value="1"/>
</dbReference>
<dbReference type="PROSITE" id="PS00096">
    <property type="entry name" value="SHMT"/>
    <property type="match status" value="1"/>
</dbReference>
<organism>
    <name type="scientific">Pseudomonas putida (strain ATCC 47054 / DSM 6125 / CFBP 8728 / NCIMB 11950 / KT2440)</name>
    <dbReference type="NCBI Taxonomy" id="160488"/>
    <lineage>
        <taxon>Bacteria</taxon>
        <taxon>Pseudomonadati</taxon>
        <taxon>Pseudomonadota</taxon>
        <taxon>Gammaproteobacteria</taxon>
        <taxon>Pseudomonadales</taxon>
        <taxon>Pseudomonadaceae</taxon>
        <taxon>Pseudomonas</taxon>
    </lineage>
</organism>
<evidence type="ECO:0000255" key="1">
    <source>
        <dbReference type="HAMAP-Rule" id="MF_00051"/>
    </source>
</evidence>
<gene>
    <name evidence="1" type="primary">glyA2</name>
    <name type="synonym">glyA-2</name>
    <name type="ordered locus">PP_0671</name>
</gene>
<name>GLYA2_PSEPK</name>
<feature type="chain" id="PRO_0000113641" description="Serine hydroxymethyltransferase 2">
    <location>
        <begin position="1"/>
        <end position="417"/>
    </location>
</feature>
<feature type="binding site" evidence="1">
    <location>
        <position position="121"/>
    </location>
    <ligand>
        <name>(6S)-5,6,7,8-tetrahydrofolate</name>
        <dbReference type="ChEBI" id="CHEBI:57453"/>
    </ligand>
</feature>
<feature type="binding site" evidence="1">
    <location>
        <begin position="125"/>
        <end position="127"/>
    </location>
    <ligand>
        <name>(6S)-5,6,7,8-tetrahydrofolate</name>
        <dbReference type="ChEBI" id="CHEBI:57453"/>
    </ligand>
</feature>
<feature type="binding site" evidence="1">
    <location>
        <begin position="354"/>
        <end position="356"/>
    </location>
    <ligand>
        <name>(6S)-5,6,7,8-tetrahydrofolate</name>
        <dbReference type="ChEBI" id="CHEBI:57453"/>
    </ligand>
</feature>
<feature type="site" description="Plays an important role in substrate specificity" evidence="1">
    <location>
        <position position="228"/>
    </location>
</feature>
<feature type="modified residue" description="N6-(pyridoxal phosphate)lysine" evidence="1">
    <location>
        <position position="229"/>
    </location>
</feature>
<protein>
    <recommendedName>
        <fullName evidence="1">Serine hydroxymethyltransferase 2</fullName>
        <shortName evidence="1">SHMT 2</shortName>
        <shortName evidence="1">Serine methylase 2</shortName>
        <ecNumber evidence="1">2.1.2.1</ecNumber>
    </recommendedName>
</protein>
<keyword id="KW-0028">Amino-acid biosynthesis</keyword>
<keyword id="KW-0963">Cytoplasm</keyword>
<keyword id="KW-0554">One-carbon metabolism</keyword>
<keyword id="KW-0663">Pyridoxal phosphate</keyword>
<keyword id="KW-1185">Reference proteome</keyword>
<keyword id="KW-0808">Transferase</keyword>
<comment type="function">
    <text evidence="1">Catalyzes the reversible interconversion of serine and glycine with tetrahydrofolate (THF) serving as the one-carbon carrier. This reaction serves as the major source of one-carbon groups required for the biosynthesis of purines, thymidylate, methionine, and other important biomolecules. Also exhibits THF-independent aldolase activity toward beta-hydroxyamino acids, producing glycine and aldehydes, via a retro-aldol mechanism.</text>
</comment>
<comment type="catalytic activity">
    <reaction evidence="1">
        <text>(6R)-5,10-methylene-5,6,7,8-tetrahydrofolate + glycine + H2O = (6S)-5,6,7,8-tetrahydrofolate + L-serine</text>
        <dbReference type="Rhea" id="RHEA:15481"/>
        <dbReference type="ChEBI" id="CHEBI:15377"/>
        <dbReference type="ChEBI" id="CHEBI:15636"/>
        <dbReference type="ChEBI" id="CHEBI:33384"/>
        <dbReference type="ChEBI" id="CHEBI:57305"/>
        <dbReference type="ChEBI" id="CHEBI:57453"/>
        <dbReference type="EC" id="2.1.2.1"/>
    </reaction>
</comment>
<comment type="cofactor">
    <cofactor evidence="1">
        <name>pyridoxal 5'-phosphate</name>
        <dbReference type="ChEBI" id="CHEBI:597326"/>
    </cofactor>
</comment>
<comment type="pathway">
    <text evidence="1">One-carbon metabolism; tetrahydrofolate interconversion.</text>
</comment>
<comment type="pathway">
    <text evidence="1">Amino-acid biosynthesis; glycine biosynthesis; glycine from L-serine: step 1/1.</text>
</comment>
<comment type="subunit">
    <text evidence="1">Homodimer.</text>
</comment>
<comment type="subcellular location">
    <subcellularLocation>
        <location evidence="1">Cytoplasm</location>
    </subcellularLocation>
</comment>
<comment type="similarity">
    <text evidence="1">Belongs to the SHMT family.</text>
</comment>
<proteinExistence type="inferred from homology"/>
<reference key="1">
    <citation type="journal article" date="2002" name="Environ. Microbiol.">
        <title>Complete genome sequence and comparative analysis of the metabolically versatile Pseudomonas putida KT2440.</title>
        <authorList>
            <person name="Nelson K.E."/>
            <person name="Weinel C."/>
            <person name="Paulsen I.T."/>
            <person name="Dodson R.J."/>
            <person name="Hilbert H."/>
            <person name="Martins dos Santos V.A.P."/>
            <person name="Fouts D.E."/>
            <person name="Gill S.R."/>
            <person name="Pop M."/>
            <person name="Holmes M."/>
            <person name="Brinkac L.M."/>
            <person name="Beanan M.J."/>
            <person name="DeBoy R.T."/>
            <person name="Daugherty S.C."/>
            <person name="Kolonay J.F."/>
            <person name="Madupu R."/>
            <person name="Nelson W.C."/>
            <person name="White O."/>
            <person name="Peterson J.D."/>
            <person name="Khouri H.M."/>
            <person name="Hance I."/>
            <person name="Chris Lee P."/>
            <person name="Holtzapple E.K."/>
            <person name="Scanlan D."/>
            <person name="Tran K."/>
            <person name="Moazzez A."/>
            <person name="Utterback T.R."/>
            <person name="Rizzo M."/>
            <person name="Lee K."/>
            <person name="Kosack D."/>
            <person name="Moestl D."/>
            <person name="Wedler H."/>
            <person name="Lauber J."/>
            <person name="Stjepandic D."/>
            <person name="Hoheisel J."/>
            <person name="Straetz M."/>
            <person name="Heim S."/>
            <person name="Kiewitz C."/>
            <person name="Eisen J.A."/>
            <person name="Timmis K.N."/>
            <person name="Duesterhoeft A."/>
            <person name="Tuemmler B."/>
            <person name="Fraser C.M."/>
        </authorList>
    </citation>
    <scope>NUCLEOTIDE SEQUENCE [LARGE SCALE GENOMIC DNA]</scope>
    <source>
        <strain>ATCC 47054 / DSM 6125 / CFBP 8728 / NCIMB 11950 / KT2440</strain>
    </source>
</reference>
<accession>Q88Q27</accession>
<sequence>MFSRDLTIAKYDAELFEAMQQEALRQEEHIELIASENYTSPAVMEAQGSVLTNKYAEGYPGKRYYGGCEYVDVVEQLAIDRAKELFGADYANVQPHAGSQANAAVYLALLSAGDTILGMSLAHGGHLTHGASVSSSGKLYNAIQYGIDGNGLIDYDEVERLAVEHKPKMIVAGFSAYSQVLDFARFRAIADKVGAYLFVDMAHVAGLVAAGVYPNPVPFADVVTTTTHKTLRGPRGGLILARANADIEKKLNSAVFPGAQGGPLEHVIAAKAICFKEALQPEFKAYQQQVVKNAQAMASVFIERGFDVVSGGTQNHLFLLSLIKQEISGKDADAALGKAFITVNKNSVPNDPRSPFVTSGLRFGTPAVTTRGFKEAECKELAGWICDILADLNNEAVIDAVREKVKAICKKLPVYGN</sequence>